<comment type="function">
    <text evidence="1">Catalyzes the NADPH-dependent reduction of N-acetyl-5-glutamyl phosphate to yield N-acetyl-L-glutamate 5-semialdehyde.</text>
</comment>
<comment type="catalytic activity">
    <reaction evidence="1">
        <text>N-acetyl-L-glutamate 5-semialdehyde + phosphate + NADP(+) = N-acetyl-L-glutamyl 5-phosphate + NADPH + H(+)</text>
        <dbReference type="Rhea" id="RHEA:21588"/>
        <dbReference type="ChEBI" id="CHEBI:15378"/>
        <dbReference type="ChEBI" id="CHEBI:29123"/>
        <dbReference type="ChEBI" id="CHEBI:43474"/>
        <dbReference type="ChEBI" id="CHEBI:57783"/>
        <dbReference type="ChEBI" id="CHEBI:57936"/>
        <dbReference type="ChEBI" id="CHEBI:58349"/>
        <dbReference type="EC" id="1.2.1.38"/>
    </reaction>
</comment>
<comment type="pathway">
    <text evidence="1">Amino-acid biosynthesis; L-arginine biosynthesis; N(2)-acetyl-L-ornithine from L-glutamate: step 3/4.</text>
</comment>
<comment type="subcellular location">
    <subcellularLocation>
        <location evidence="1">Cytoplasm</location>
    </subcellularLocation>
</comment>
<comment type="similarity">
    <text evidence="1">Belongs to the NAGSA dehydrogenase family. Type 1 subfamily.</text>
</comment>
<proteinExistence type="inferred from homology"/>
<accession>Q0ABJ9</accession>
<name>ARGC_ALKEH</name>
<evidence type="ECO:0000255" key="1">
    <source>
        <dbReference type="HAMAP-Rule" id="MF_00150"/>
    </source>
</evidence>
<reference key="1">
    <citation type="submission" date="2006-08" db="EMBL/GenBank/DDBJ databases">
        <title>Complete sequence of Alkalilimnicola ehrilichei MLHE-1.</title>
        <authorList>
            <person name="Copeland A."/>
            <person name="Lucas S."/>
            <person name="Lapidus A."/>
            <person name="Barry K."/>
            <person name="Detter J.C."/>
            <person name="Glavina del Rio T."/>
            <person name="Hammon N."/>
            <person name="Israni S."/>
            <person name="Dalin E."/>
            <person name="Tice H."/>
            <person name="Pitluck S."/>
            <person name="Sims D."/>
            <person name="Brettin T."/>
            <person name="Bruce D."/>
            <person name="Han C."/>
            <person name="Tapia R."/>
            <person name="Gilna P."/>
            <person name="Schmutz J."/>
            <person name="Larimer F."/>
            <person name="Land M."/>
            <person name="Hauser L."/>
            <person name="Kyrpides N."/>
            <person name="Mikhailova N."/>
            <person name="Oremland R.S."/>
            <person name="Hoeft S.E."/>
            <person name="Switzer-Blum J."/>
            <person name="Kulp T."/>
            <person name="King G."/>
            <person name="Tabita R."/>
            <person name="Witte B."/>
            <person name="Santini J.M."/>
            <person name="Basu P."/>
            <person name="Hollibaugh J.T."/>
            <person name="Xie G."/>
            <person name="Stolz J.F."/>
            <person name="Richardson P."/>
        </authorList>
    </citation>
    <scope>NUCLEOTIDE SEQUENCE [LARGE SCALE GENOMIC DNA]</scope>
    <source>
        <strain>ATCC BAA-1101 / DSM 17681 / MLHE-1</strain>
    </source>
</reference>
<organism>
    <name type="scientific">Alkalilimnicola ehrlichii (strain ATCC BAA-1101 / DSM 17681 / MLHE-1)</name>
    <dbReference type="NCBI Taxonomy" id="187272"/>
    <lineage>
        <taxon>Bacteria</taxon>
        <taxon>Pseudomonadati</taxon>
        <taxon>Pseudomonadota</taxon>
        <taxon>Gammaproteobacteria</taxon>
        <taxon>Chromatiales</taxon>
        <taxon>Ectothiorhodospiraceae</taxon>
        <taxon>Alkalilimnicola</taxon>
    </lineage>
</organism>
<protein>
    <recommendedName>
        <fullName evidence="1">N-acetyl-gamma-glutamyl-phosphate reductase</fullName>
        <shortName evidence="1">AGPR</shortName>
        <ecNumber evidence="1">1.2.1.38</ecNumber>
    </recommendedName>
    <alternativeName>
        <fullName evidence="1">N-acetyl-glutamate semialdehyde dehydrogenase</fullName>
        <shortName evidence="1">NAGSA dehydrogenase</shortName>
    </alternativeName>
</protein>
<gene>
    <name evidence="1" type="primary">argC</name>
    <name type="ordered locus">Mlg_0434</name>
</gene>
<feature type="chain" id="PRO_1000010973" description="N-acetyl-gamma-glutamyl-phosphate reductase">
    <location>
        <begin position="1"/>
        <end position="343"/>
    </location>
</feature>
<feature type="active site" evidence="1">
    <location>
        <position position="149"/>
    </location>
</feature>
<keyword id="KW-0028">Amino-acid biosynthesis</keyword>
<keyword id="KW-0055">Arginine biosynthesis</keyword>
<keyword id="KW-0963">Cytoplasm</keyword>
<keyword id="KW-0521">NADP</keyword>
<keyword id="KW-0560">Oxidoreductase</keyword>
<keyword id="KW-1185">Reference proteome</keyword>
<dbReference type="EC" id="1.2.1.38" evidence="1"/>
<dbReference type="EMBL" id="CP000453">
    <property type="protein sequence ID" value="ABI55788.1"/>
    <property type="molecule type" value="Genomic_DNA"/>
</dbReference>
<dbReference type="RefSeq" id="WP_011628184.1">
    <property type="nucleotide sequence ID" value="NC_008340.1"/>
</dbReference>
<dbReference type="SMR" id="Q0ABJ9"/>
<dbReference type="KEGG" id="aeh:Mlg_0434"/>
<dbReference type="eggNOG" id="COG0002">
    <property type="taxonomic scope" value="Bacteria"/>
</dbReference>
<dbReference type="HOGENOM" id="CLU_006384_0_1_6"/>
<dbReference type="OrthoDB" id="9801289at2"/>
<dbReference type="UniPathway" id="UPA00068">
    <property type="reaction ID" value="UER00108"/>
</dbReference>
<dbReference type="Proteomes" id="UP000001962">
    <property type="component" value="Chromosome"/>
</dbReference>
<dbReference type="GO" id="GO:0005737">
    <property type="term" value="C:cytoplasm"/>
    <property type="evidence" value="ECO:0007669"/>
    <property type="project" value="UniProtKB-SubCell"/>
</dbReference>
<dbReference type="GO" id="GO:0003942">
    <property type="term" value="F:N-acetyl-gamma-glutamyl-phosphate reductase activity"/>
    <property type="evidence" value="ECO:0007669"/>
    <property type="project" value="UniProtKB-UniRule"/>
</dbReference>
<dbReference type="GO" id="GO:0051287">
    <property type="term" value="F:NAD binding"/>
    <property type="evidence" value="ECO:0007669"/>
    <property type="project" value="InterPro"/>
</dbReference>
<dbReference type="GO" id="GO:0070401">
    <property type="term" value="F:NADP+ binding"/>
    <property type="evidence" value="ECO:0007669"/>
    <property type="project" value="InterPro"/>
</dbReference>
<dbReference type="GO" id="GO:0006526">
    <property type="term" value="P:L-arginine biosynthetic process"/>
    <property type="evidence" value="ECO:0007669"/>
    <property type="project" value="UniProtKB-UniRule"/>
</dbReference>
<dbReference type="CDD" id="cd23934">
    <property type="entry name" value="AGPR_1_C"/>
    <property type="match status" value="1"/>
</dbReference>
<dbReference type="CDD" id="cd17895">
    <property type="entry name" value="AGPR_1_N"/>
    <property type="match status" value="1"/>
</dbReference>
<dbReference type="FunFam" id="3.30.360.10:FF:000014">
    <property type="entry name" value="N-acetyl-gamma-glutamyl-phosphate reductase"/>
    <property type="match status" value="1"/>
</dbReference>
<dbReference type="Gene3D" id="3.30.360.10">
    <property type="entry name" value="Dihydrodipicolinate Reductase, domain 2"/>
    <property type="match status" value="1"/>
</dbReference>
<dbReference type="Gene3D" id="3.40.50.720">
    <property type="entry name" value="NAD(P)-binding Rossmann-like Domain"/>
    <property type="match status" value="1"/>
</dbReference>
<dbReference type="HAMAP" id="MF_00150">
    <property type="entry name" value="ArgC_type1"/>
    <property type="match status" value="1"/>
</dbReference>
<dbReference type="InterPro" id="IPR000706">
    <property type="entry name" value="AGPR_type-1"/>
</dbReference>
<dbReference type="InterPro" id="IPR036291">
    <property type="entry name" value="NAD(P)-bd_dom_sf"/>
</dbReference>
<dbReference type="InterPro" id="IPR050085">
    <property type="entry name" value="NAGSA_dehydrogenase"/>
</dbReference>
<dbReference type="InterPro" id="IPR000534">
    <property type="entry name" value="Semialdehyde_DH_NAD-bd"/>
</dbReference>
<dbReference type="NCBIfam" id="TIGR01850">
    <property type="entry name" value="argC"/>
    <property type="match status" value="1"/>
</dbReference>
<dbReference type="PANTHER" id="PTHR32338:SF10">
    <property type="entry name" value="N-ACETYL-GAMMA-GLUTAMYL-PHOSPHATE REDUCTASE, CHLOROPLASTIC-RELATED"/>
    <property type="match status" value="1"/>
</dbReference>
<dbReference type="PANTHER" id="PTHR32338">
    <property type="entry name" value="N-ACETYL-GAMMA-GLUTAMYL-PHOSPHATE REDUCTASE, CHLOROPLASTIC-RELATED-RELATED"/>
    <property type="match status" value="1"/>
</dbReference>
<dbReference type="Pfam" id="PF01118">
    <property type="entry name" value="Semialdhyde_dh"/>
    <property type="match status" value="1"/>
</dbReference>
<dbReference type="Pfam" id="PF22698">
    <property type="entry name" value="Semialdhyde_dhC_1"/>
    <property type="match status" value="1"/>
</dbReference>
<dbReference type="SMART" id="SM00859">
    <property type="entry name" value="Semialdhyde_dh"/>
    <property type="match status" value="1"/>
</dbReference>
<dbReference type="SUPFAM" id="SSF55347">
    <property type="entry name" value="Glyceraldehyde-3-phosphate dehydrogenase-like, C-terminal domain"/>
    <property type="match status" value="1"/>
</dbReference>
<dbReference type="SUPFAM" id="SSF51735">
    <property type="entry name" value="NAD(P)-binding Rossmann-fold domains"/>
    <property type="match status" value="1"/>
</dbReference>
<sequence length="343" mass="36618">MIEVGIVGGTGYTGVELLRLLARHPEARLRVITSRGNAGTRVDELFPSLRGEVELAFSEPDVDRLAACDLVFFATPNGTAMQMVPDLLARDTRVVDLGADFRLKDVETWSRWYGMTHACPELVAEAAYGLPELNREAIRGARLVANPGCYPTAVGLGWLPLLEAGLVETRGLVASCVSGASGAGRAANVATLLCEVNESFKAYGADGHRHLPEIRQSLAQVAGGAVELTFVPHLVPMTRGMHASLYATLRGDAGDLQVLFEQRYADEPFVDVLPAGAHPETRTVRGTNLCRLAVRRAPESDQVIVLSVIDNLTKGAAGQAVQNMNLMFGLPETAGLDAPAVLP</sequence>